<protein>
    <recommendedName>
        <fullName>Uncharacterized protein YnbB</fullName>
    </recommendedName>
</protein>
<proteinExistence type="predicted"/>
<gene>
    <name type="primary">ynbB</name>
    <name type="ordered locus">BSU17440</name>
</gene>
<reference key="1">
    <citation type="submission" date="1996-08" db="EMBL/GenBank/DDBJ databases">
        <title>Sequencing of a 26 kb region of the Bacillus subtilis genome downstream of spoVJ.</title>
        <authorList>
            <person name="Borchert S."/>
            <person name="Klein C."/>
            <person name="Piksa B."/>
            <person name="Hammelmann M."/>
            <person name="Entian K.-D."/>
        </authorList>
    </citation>
    <scope>NUCLEOTIDE SEQUENCE [GENOMIC DNA]</scope>
</reference>
<reference key="2">
    <citation type="journal article" date="1997" name="Nature">
        <title>The complete genome sequence of the Gram-positive bacterium Bacillus subtilis.</title>
        <authorList>
            <person name="Kunst F."/>
            <person name="Ogasawara N."/>
            <person name="Moszer I."/>
            <person name="Albertini A.M."/>
            <person name="Alloni G."/>
            <person name="Azevedo V."/>
            <person name="Bertero M.G."/>
            <person name="Bessieres P."/>
            <person name="Bolotin A."/>
            <person name="Borchert S."/>
            <person name="Borriss R."/>
            <person name="Boursier L."/>
            <person name="Brans A."/>
            <person name="Braun M."/>
            <person name="Brignell S.C."/>
            <person name="Bron S."/>
            <person name="Brouillet S."/>
            <person name="Bruschi C.V."/>
            <person name="Caldwell B."/>
            <person name="Capuano V."/>
            <person name="Carter N.M."/>
            <person name="Choi S.-K."/>
            <person name="Codani J.-J."/>
            <person name="Connerton I.F."/>
            <person name="Cummings N.J."/>
            <person name="Daniel R.A."/>
            <person name="Denizot F."/>
            <person name="Devine K.M."/>
            <person name="Duesterhoeft A."/>
            <person name="Ehrlich S.D."/>
            <person name="Emmerson P.T."/>
            <person name="Entian K.-D."/>
            <person name="Errington J."/>
            <person name="Fabret C."/>
            <person name="Ferrari E."/>
            <person name="Foulger D."/>
            <person name="Fritz C."/>
            <person name="Fujita M."/>
            <person name="Fujita Y."/>
            <person name="Fuma S."/>
            <person name="Galizzi A."/>
            <person name="Galleron N."/>
            <person name="Ghim S.-Y."/>
            <person name="Glaser P."/>
            <person name="Goffeau A."/>
            <person name="Golightly E.J."/>
            <person name="Grandi G."/>
            <person name="Guiseppi G."/>
            <person name="Guy B.J."/>
            <person name="Haga K."/>
            <person name="Haiech J."/>
            <person name="Harwood C.R."/>
            <person name="Henaut A."/>
            <person name="Hilbert H."/>
            <person name="Holsappel S."/>
            <person name="Hosono S."/>
            <person name="Hullo M.-F."/>
            <person name="Itaya M."/>
            <person name="Jones L.-M."/>
            <person name="Joris B."/>
            <person name="Karamata D."/>
            <person name="Kasahara Y."/>
            <person name="Klaerr-Blanchard M."/>
            <person name="Klein C."/>
            <person name="Kobayashi Y."/>
            <person name="Koetter P."/>
            <person name="Koningstein G."/>
            <person name="Krogh S."/>
            <person name="Kumano M."/>
            <person name="Kurita K."/>
            <person name="Lapidus A."/>
            <person name="Lardinois S."/>
            <person name="Lauber J."/>
            <person name="Lazarevic V."/>
            <person name="Lee S.-M."/>
            <person name="Levine A."/>
            <person name="Liu H."/>
            <person name="Masuda S."/>
            <person name="Mauel C."/>
            <person name="Medigue C."/>
            <person name="Medina N."/>
            <person name="Mellado R.P."/>
            <person name="Mizuno M."/>
            <person name="Moestl D."/>
            <person name="Nakai S."/>
            <person name="Noback M."/>
            <person name="Noone D."/>
            <person name="O'Reilly M."/>
            <person name="Ogawa K."/>
            <person name="Ogiwara A."/>
            <person name="Oudega B."/>
            <person name="Park S.-H."/>
            <person name="Parro V."/>
            <person name="Pohl T.M."/>
            <person name="Portetelle D."/>
            <person name="Porwollik S."/>
            <person name="Prescott A.M."/>
            <person name="Presecan E."/>
            <person name="Pujic P."/>
            <person name="Purnelle B."/>
            <person name="Rapoport G."/>
            <person name="Rey M."/>
            <person name="Reynolds S."/>
            <person name="Rieger M."/>
            <person name="Rivolta C."/>
            <person name="Rocha E."/>
            <person name="Roche B."/>
            <person name="Rose M."/>
            <person name="Sadaie Y."/>
            <person name="Sato T."/>
            <person name="Scanlan E."/>
            <person name="Schleich S."/>
            <person name="Schroeter R."/>
            <person name="Scoffone F."/>
            <person name="Sekiguchi J."/>
            <person name="Sekowska A."/>
            <person name="Seror S.J."/>
            <person name="Serror P."/>
            <person name="Shin B.-S."/>
            <person name="Soldo B."/>
            <person name="Sorokin A."/>
            <person name="Tacconi E."/>
            <person name="Takagi T."/>
            <person name="Takahashi H."/>
            <person name="Takemaru K."/>
            <person name="Takeuchi M."/>
            <person name="Tamakoshi A."/>
            <person name="Tanaka T."/>
            <person name="Terpstra P."/>
            <person name="Tognoni A."/>
            <person name="Tosato V."/>
            <person name="Uchiyama S."/>
            <person name="Vandenbol M."/>
            <person name="Vannier F."/>
            <person name="Vassarotti A."/>
            <person name="Viari A."/>
            <person name="Wambutt R."/>
            <person name="Wedler E."/>
            <person name="Wedler H."/>
            <person name="Weitzenegger T."/>
            <person name="Winters P."/>
            <person name="Wipat A."/>
            <person name="Yamamoto H."/>
            <person name="Yamane K."/>
            <person name="Yasumoto K."/>
            <person name="Yata K."/>
            <person name="Yoshida K."/>
            <person name="Yoshikawa H.-F."/>
            <person name="Zumstein E."/>
            <person name="Yoshikawa H."/>
            <person name="Danchin A."/>
        </authorList>
    </citation>
    <scope>NUCLEOTIDE SEQUENCE [LARGE SCALE GENOMIC DNA]</scope>
    <source>
        <strain>168</strain>
    </source>
</reference>
<reference key="3">
    <citation type="journal article" date="2009" name="Microbiology">
        <title>From a consortium sequence to a unified sequence: the Bacillus subtilis 168 reference genome a decade later.</title>
        <authorList>
            <person name="Barbe V."/>
            <person name="Cruveiller S."/>
            <person name="Kunst F."/>
            <person name="Lenoble P."/>
            <person name="Meurice G."/>
            <person name="Sekowska A."/>
            <person name="Vallenet D."/>
            <person name="Wang T."/>
            <person name="Moszer I."/>
            <person name="Medigue C."/>
            <person name="Danchin A."/>
        </authorList>
    </citation>
    <scope>SEQUENCE REVISION TO 332 AND 349</scope>
</reference>
<feature type="chain" id="PRO_0000360718" description="Uncharacterized protein YnbB">
    <location>
        <begin position="1"/>
        <end position="421"/>
    </location>
</feature>
<feature type="sequence conflict" description="In Ref. 1; AAB41078." evidence="1" ref="1">
    <original>R</original>
    <variation>G</variation>
    <location>
        <position position="332"/>
    </location>
</feature>
<feature type="sequence conflict" description="In Ref. 1; AAB41078." evidence="1" ref="1">
    <original>N</original>
    <variation>D</variation>
    <location>
        <position position="349"/>
    </location>
</feature>
<sequence>MFDTLTHGELLKKTAMEVEADIAGIHKQIEEISERNEWRVLQSYRKHKVSDTHFTPSTGYGYDDIGRDTLESIYADVFGGEAGLVRPQIISGTHAISIALFGVLRPGDELLYITGKPYDTLEEIVGVRGGENAGSLKDFQIGYNAVDLTKDGKIDYDAVAAAINPKTKVIGIQRSKGYANRPSFLISEIKEMIRFVKEINENLIVFVDNCYGEFVEELEPCHVGADLMAGSLIKNPGGGLAKTGGYLVGKAKWIEACSYRMTSPGIGREAGASLYSLQEMYQGFFLAPHVVSQSLKGAVFTARFLEKLGFTSNPKWDAKRTDLIQSVEFSDREKMIAFCQAIQFASPINAHVTPYPAYMPGYEDDVIMAAGTFIQGASIELSADGPIRPPYVAYVQGGLTYSHVKNAICSAVDSLMQKQLI</sequence>
<accession>P94479</accession>
<accession>Q796H9</accession>
<keyword id="KW-1185">Reference proteome</keyword>
<name>YNBB_BACSU</name>
<dbReference type="EMBL" id="U66480">
    <property type="protein sequence ID" value="AAB41078.1"/>
    <property type="molecule type" value="Genomic_DNA"/>
</dbReference>
<dbReference type="EMBL" id="AL009126">
    <property type="protein sequence ID" value="CAB13628.2"/>
    <property type="molecule type" value="Genomic_DNA"/>
</dbReference>
<dbReference type="PIR" id="C69888">
    <property type="entry name" value="C69888"/>
</dbReference>
<dbReference type="RefSeq" id="NP_389626.2">
    <property type="nucleotide sequence ID" value="NC_000964.3"/>
</dbReference>
<dbReference type="RefSeq" id="WP_003245218.1">
    <property type="nucleotide sequence ID" value="NZ_OZ025638.1"/>
</dbReference>
<dbReference type="SMR" id="P94479"/>
<dbReference type="FunCoup" id="P94479">
    <property type="interactions" value="50"/>
</dbReference>
<dbReference type="STRING" id="224308.BSU17440"/>
<dbReference type="PaxDb" id="224308-BSU17440"/>
<dbReference type="EnsemblBacteria" id="CAB13628">
    <property type="protein sequence ID" value="CAB13628"/>
    <property type="gene ID" value="BSU_17440"/>
</dbReference>
<dbReference type="GeneID" id="940047"/>
<dbReference type="KEGG" id="bsu:BSU17440"/>
<dbReference type="PATRIC" id="fig|224308.179.peg.1892"/>
<dbReference type="eggNOG" id="COG4100">
    <property type="taxonomic scope" value="Bacteria"/>
</dbReference>
<dbReference type="InParanoid" id="P94479"/>
<dbReference type="OrthoDB" id="9764766at2"/>
<dbReference type="PhylomeDB" id="P94479"/>
<dbReference type="BioCyc" id="BSUB:BSU17440-MONOMER"/>
<dbReference type="Proteomes" id="UP000001570">
    <property type="component" value="Chromosome"/>
</dbReference>
<dbReference type="Gene3D" id="3.90.1150.60">
    <property type="entry name" value="Methioning gamme-lyase, C-terminal domain"/>
    <property type="match status" value="1"/>
</dbReference>
<dbReference type="Gene3D" id="3.40.640.10">
    <property type="entry name" value="Type I PLP-dependent aspartate aminotransferase-like (Major domain)"/>
    <property type="match status" value="1"/>
</dbReference>
<dbReference type="InterPro" id="IPR009651">
    <property type="entry name" value="Met_g_lyase_put"/>
</dbReference>
<dbReference type="InterPro" id="IPR015424">
    <property type="entry name" value="PyrdxlP-dep_Trfase"/>
</dbReference>
<dbReference type="InterPro" id="IPR015421">
    <property type="entry name" value="PyrdxlP-dep_Trfase_major"/>
</dbReference>
<dbReference type="PANTHER" id="PTHR46658">
    <property type="entry name" value="CYS OR MET METABOLISM PYRIDOXAL-PHOSPHATE-DEPENDENT ENZYME"/>
    <property type="match status" value="1"/>
</dbReference>
<dbReference type="PANTHER" id="PTHR46658:SF1">
    <property type="entry name" value="CYS OR MET METABOLISM PYRIDOXAL-PHOSPHATE-DEPENDENT ENZYME"/>
    <property type="match status" value="1"/>
</dbReference>
<dbReference type="Pfam" id="PF06838">
    <property type="entry name" value="Met_gamma_lyase"/>
    <property type="match status" value="1"/>
</dbReference>
<dbReference type="SUPFAM" id="SSF53383">
    <property type="entry name" value="PLP-dependent transferases"/>
    <property type="match status" value="1"/>
</dbReference>
<organism>
    <name type="scientific">Bacillus subtilis (strain 168)</name>
    <dbReference type="NCBI Taxonomy" id="224308"/>
    <lineage>
        <taxon>Bacteria</taxon>
        <taxon>Bacillati</taxon>
        <taxon>Bacillota</taxon>
        <taxon>Bacilli</taxon>
        <taxon>Bacillales</taxon>
        <taxon>Bacillaceae</taxon>
        <taxon>Bacillus</taxon>
    </lineage>
</organism>
<evidence type="ECO:0000305" key="1"/>